<proteinExistence type="inferred from homology"/>
<dbReference type="EMBL" id="GCVH01000010">
    <property type="protein sequence ID" value="JAI17883.1"/>
    <property type="molecule type" value="Transcribed_RNA"/>
</dbReference>
<dbReference type="GO" id="GO:0005576">
    <property type="term" value="C:extracellular region"/>
    <property type="evidence" value="ECO:0007669"/>
    <property type="project" value="UniProtKB-SubCell"/>
</dbReference>
<dbReference type="GO" id="GO:0090729">
    <property type="term" value="F:toxin activity"/>
    <property type="evidence" value="ECO:0007669"/>
    <property type="project" value="UniProtKB-KW"/>
</dbReference>
<evidence type="ECO:0000250" key="1">
    <source>
        <dbReference type="UniProtKB" id="P0DQT5"/>
    </source>
</evidence>
<evidence type="ECO:0000255" key="2"/>
<evidence type="ECO:0000305" key="3"/>
<evidence type="ECO:0000305" key="4">
    <source ref="1"/>
</evidence>
<evidence type="ECO:0000312" key="5">
    <source>
        <dbReference type="EMBL" id="JAI17883.1"/>
    </source>
</evidence>
<comment type="function">
    <text evidence="1">Moderately activates human somatostatin receptors (SSTR) with a preferential activation of SSTR1 and SSTR4. In vivo, does not cause behavioral changes in mice within a few minutes of intracranial injection, but causes a progressive loss of movement thereafter. Four to five hours after injection, mice recover, even with the highest dose tested. Shows antinociception and antihyperalgesia activities in two mouse models of acute pain, most probably by acting outside the central nervous system.</text>
</comment>
<comment type="subcellular location">
    <subcellularLocation>
        <location evidence="1">Secreted</location>
    </subcellularLocation>
</comment>
<comment type="tissue specificity">
    <text evidence="4">Expressed by the venom duct.</text>
</comment>
<comment type="domain">
    <text evidence="4">The cysteine framework is C-C.</text>
</comment>
<comment type="miscellaneous">
    <text evidence="1">This peptide is an evolutionarily optimized stable analog of somatostatin. In addition, it adopts nearly identical conformations as in the somatostatin drug analog Octreotide. As this drug, it contains a D-Trp at the same position, whose synthesis is a common strategy used for enhancing the metabolic stability of compounds in drug design.</text>
</comment>
<comment type="miscellaneous">
    <text evidence="1">Consomatins evolved by gene duplication of a 'Somatostatin and related peptides (SSRP)' gene expressed in the snail neuroendocrine system.</text>
</comment>
<comment type="miscellaneous">
    <text evidence="1">Negative results: does not activate any of the other 313 GPCRs tested. Shows little or no activating activity at the SSTR2, SSTR3 and SSTR5.</text>
</comment>
<comment type="similarity">
    <text evidence="3">Belongs to the conotoxin C superfamily. Consomatin family.</text>
</comment>
<feature type="signal peptide" evidence="2">
    <location>
        <begin position="1"/>
        <end position="22"/>
    </location>
</feature>
<feature type="propeptide" id="PRO_0000456110" evidence="1">
    <location>
        <begin position="23"/>
        <end position="57"/>
    </location>
</feature>
<feature type="peptide" id="PRO_5005520531" description="Consomatin Le1" evidence="1">
    <location>
        <begin position="58"/>
        <end position="70"/>
    </location>
</feature>
<feature type="propeptide" id="PRO_0000456111" evidence="1">
    <location>
        <begin position="71"/>
        <end position="81"/>
    </location>
</feature>
<feature type="modified residue" description="4-carboxyglutamate" evidence="1">
    <location>
        <position position="58"/>
    </location>
</feature>
<feature type="modified residue" description="D-tryptophan" evidence="1">
    <location>
        <position position="64"/>
    </location>
</feature>
<feature type="modified residue" description="4-hydroxyproline" evidence="1">
    <location>
        <position position="69"/>
    </location>
</feature>
<feature type="disulfide bond" evidence="1">
    <location>
        <begin position="62"/>
        <end position="67"/>
    </location>
</feature>
<sequence>MQTAYWVMVMMMVWITAPLSEGGKPNDVIRGLVPDDLTPQLILRSLISRRRSDKDVREGYKCVWKTCMPALWRRHDLKGKD</sequence>
<name>CSST1_CONLV</name>
<keyword id="KW-0208">D-amino acid</keyword>
<keyword id="KW-1015">Disulfide bond</keyword>
<keyword id="KW-1213">G-protein coupled receptor impairing toxin</keyword>
<keyword id="KW-0301">Gamma-carboxyglutamic acid</keyword>
<keyword id="KW-0379">Hydroxylation</keyword>
<keyword id="KW-0964">Secreted</keyword>
<keyword id="KW-0732">Signal</keyword>
<keyword id="KW-0800">Toxin</keyword>
<organism>
    <name type="scientific">Conus lenavati</name>
    <name type="common">Cone snail</name>
    <dbReference type="NCBI Taxonomy" id="1519839"/>
    <lineage>
        <taxon>Eukaryota</taxon>
        <taxon>Metazoa</taxon>
        <taxon>Spiralia</taxon>
        <taxon>Lophotrochozoa</taxon>
        <taxon>Mollusca</taxon>
        <taxon>Gastropoda</taxon>
        <taxon>Caenogastropoda</taxon>
        <taxon>Neogastropoda</taxon>
        <taxon>Conoidea</taxon>
        <taxon>Conidae</taxon>
        <taxon>Conus</taxon>
        <taxon>Splinoconus</taxon>
    </lineage>
</organism>
<protein>
    <recommendedName>
        <fullName evidence="3">Consomatin Le1</fullName>
        <shortName evidence="3">ConSST Le1</shortName>
    </recommendedName>
    <alternativeName>
        <fullName evidence="3">Somatostatin-related peptide</fullName>
        <shortName evidence="3">SSRP</shortName>
    </alternativeName>
</protein>
<accession>A0A0K8TUE2</accession>
<reference evidence="5" key="1">
    <citation type="submission" date="2015-04" db="EMBL/GenBank/DDBJ databases">
        <authorList>
            <person name="Syromyatnikov M.Y."/>
            <person name="Popov V.N."/>
        </authorList>
    </citation>
    <scope>NUCLEOTIDE SEQUENCE [MRNA]</scope>
    <source>
        <tissue>Venom duct</tissue>
    </source>
</reference>